<proteinExistence type="inferred from homology"/>
<organism>
    <name type="scientific">Staphylococcus aureus (strain bovine RF122 / ET3-1)</name>
    <dbReference type="NCBI Taxonomy" id="273036"/>
    <lineage>
        <taxon>Bacteria</taxon>
        <taxon>Bacillati</taxon>
        <taxon>Bacillota</taxon>
        <taxon>Bacilli</taxon>
        <taxon>Bacillales</taxon>
        <taxon>Staphylococcaceae</taxon>
        <taxon>Staphylococcus</taxon>
    </lineage>
</organism>
<comment type="function">
    <text evidence="1">Carrier of the growing fatty acid chain in fatty acid biosynthesis.</text>
</comment>
<comment type="pathway">
    <text evidence="1">Lipid metabolism; fatty acid biosynthesis.</text>
</comment>
<comment type="subcellular location">
    <subcellularLocation>
        <location evidence="1">Cytoplasm</location>
    </subcellularLocation>
</comment>
<comment type="PTM">
    <text evidence="1">4'-phosphopantetheine is transferred from CoA to a specific serine of apo-ACP by AcpS. This modification is essential for activity because fatty acids are bound in thioester linkage to the sulfhydryl of the prosthetic group.</text>
</comment>
<comment type="similarity">
    <text evidence="1">Belongs to the acyl carrier protein (ACP) family.</text>
</comment>
<keyword id="KW-0963">Cytoplasm</keyword>
<keyword id="KW-0275">Fatty acid biosynthesis</keyword>
<keyword id="KW-0276">Fatty acid metabolism</keyword>
<keyword id="KW-0444">Lipid biosynthesis</keyword>
<keyword id="KW-0443">Lipid metabolism</keyword>
<keyword id="KW-0596">Phosphopantetheine</keyword>
<keyword id="KW-0597">Phosphoprotein</keyword>
<name>ACP_STAAB</name>
<protein>
    <recommendedName>
        <fullName evidence="1">Acyl carrier protein</fullName>
        <shortName evidence="1">ACP</shortName>
    </recommendedName>
</protein>
<reference key="1">
    <citation type="journal article" date="2007" name="PLoS ONE">
        <title>Molecular correlates of host specialization in Staphylococcus aureus.</title>
        <authorList>
            <person name="Herron-Olson L."/>
            <person name="Fitzgerald J.R."/>
            <person name="Musser J.M."/>
            <person name="Kapur V."/>
        </authorList>
    </citation>
    <scope>NUCLEOTIDE SEQUENCE [LARGE SCALE GENOMIC DNA]</scope>
    <source>
        <strain>bovine RF122 / ET3-1</strain>
    </source>
</reference>
<feature type="chain" id="PRO_1000066700" description="Acyl carrier protein">
    <location>
        <begin position="1"/>
        <end position="77"/>
    </location>
</feature>
<feature type="domain" description="Carrier" evidence="2">
    <location>
        <begin position="1"/>
        <end position="76"/>
    </location>
</feature>
<feature type="modified residue" description="O-(pantetheine 4'-phosphoryl)serine" evidence="2">
    <location>
        <position position="36"/>
    </location>
</feature>
<evidence type="ECO:0000255" key="1">
    <source>
        <dbReference type="HAMAP-Rule" id="MF_01217"/>
    </source>
</evidence>
<evidence type="ECO:0000255" key="2">
    <source>
        <dbReference type="PROSITE-ProRule" id="PRU00258"/>
    </source>
</evidence>
<gene>
    <name evidence="1" type="primary">acpP</name>
    <name type="ordered locus">SAB1096</name>
</gene>
<dbReference type="EMBL" id="AJ938182">
    <property type="protein sequence ID" value="CAI80785.1"/>
    <property type="molecule type" value="Genomic_DNA"/>
</dbReference>
<dbReference type="RefSeq" id="WP_000426914.1">
    <property type="nucleotide sequence ID" value="NC_007622.1"/>
</dbReference>
<dbReference type="SMR" id="Q2YXI4"/>
<dbReference type="KEGG" id="sab:SAB1096"/>
<dbReference type="HOGENOM" id="CLU_108696_5_1_9"/>
<dbReference type="UniPathway" id="UPA00094"/>
<dbReference type="GO" id="GO:0005829">
    <property type="term" value="C:cytosol"/>
    <property type="evidence" value="ECO:0007669"/>
    <property type="project" value="TreeGrafter"/>
</dbReference>
<dbReference type="GO" id="GO:0016020">
    <property type="term" value="C:membrane"/>
    <property type="evidence" value="ECO:0007669"/>
    <property type="project" value="GOC"/>
</dbReference>
<dbReference type="GO" id="GO:0000035">
    <property type="term" value="F:acyl binding"/>
    <property type="evidence" value="ECO:0007669"/>
    <property type="project" value="TreeGrafter"/>
</dbReference>
<dbReference type="GO" id="GO:0000036">
    <property type="term" value="F:acyl carrier activity"/>
    <property type="evidence" value="ECO:0007669"/>
    <property type="project" value="UniProtKB-UniRule"/>
</dbReference>
<dbReference type="GO" id="GO:0009245">
    <property type="term" value="P:lipid A biosynthetic process"/>
    <property type="evidence" value="ECO:0007669"/>
    <property type="project" value="TreeGrafter"/>
</dbReference>
<dbReference type="FunFam" id="1.10.1200.10:FF:000001">
    <property type="entry name" value="Acyl carrier protein"/>
    <property type="match status" value="1"/>
</dbReference>
<dbReference type="Gene3D" id="1.10.1200.10">
    <property type="entry name" value="ACP-like"/>
    <property type="match status" value="1"/>
</dbReference>
<dbReference type="HAMAP" id="MF_01217">
    <property type="entry name" value="Acyl_carrier"/>
    <property type="match status" value="1"/>
</dbReference>
<dbReference type="InterPro" id="IPR003231">
    <property type="entry name" value="ACP"/>
</dbReference>
<dbReference type="InterPro" id="IPR036736">
    <property type="entry name" value="ACP-like_sf"/>
</dbReference>
<dbReference type="InterPro" id="IPR009081">
    <property type="entry name" value="PP-bd_ACP"/>
</dbReference>
<dbReference type="InterPro" id="IPR006162">
    <property type="entry name" value="Ppantetheine_attach_site"/>
</dbReference>
<dbReference type="NCBIfam" id="TIGR00517">
    <property type="entry name" value="acyl_carrier"/>
    <property type="match status" value="1"/>
</dbReference>
<dbReference type="NCBIfam" id="NF002148">
    <property type="entry name" value="PRK00982.1-2"/>
    <property type="match status" value="1"/>
</dbReference>
<dbReference type="NCBIfam" id="NF002150">
    <property type="entry name" value="PRK00982.1-4"/>
    <property type="match status" value="1"/>
</dbReference>
<dbReference type="NCBIfam" id="NF002151">
    <property type="entry name" value="PRK00982.1-5"/>
    <property type="match status" value="1"/>
</dbReference>
<dbReference type="PANTHER" id="PTHR20863">
    <property type="entry name" value="ACYL CARRIER PROTEIN"/>
    <property type="match status" value="1"/>
</dbReference>
<dbReference type="PANTHER" id="PTHR20863:SF76">
    <property type="entry name" value="CARRIER DOMAIN-CONTAINING PROTEIN"/>
    <property type="match status" value="1"/>
</dbReference>
<dbReference type="Pfam" id="PF00550">
    <property type="entry name" value="PP-binding"/>
    <property type="match status" value="1"/>
</dbReference>
<dbReference type="SUPFAM" id="SSF47336">
    <property type="entry name" value="ACP-like"/>
    <property type="match status" value="1"/>
</dbReference>
<dbReference type="PROSITE" id="PS50075">
    <property type="entry name" value="CARRIER"/>
    <property type="match status" value="1"/>
</dbReference>
<dbReference type="PROSITE" id="PS00012">
    <property type="entry name" value="PHOSPHOPANTETHEINE"/>
    <property type="match status" value="1"/>
</dbReference>
<accession>Q2YXI4</accession>
<sequence>MENFDKVKDIIVDRLGVDADKVTEDASFKDDLGADSLDIAELVMELEDEFGTEIPDEEAEKINTVGDAVKFINSLEK</sequence>